<gene>
    <name evidence="1" type="primary">petL</name>
</gene>
<organism>
    <name type="scientific">Oxybasis rubra</name>
    <name type="common">Red goosefoot</name>
    <name type="synonym">Chenopodium rubrum</name>
    <dbReference type="NCBI Taxonomy" id="3560"/>
    <lineage>
        <taxon>Eukaryota</taxon>
        <taxon>Viridiplantae</taxon>
        <taxon>Streptophyta</taxon>
        <taxon>Embryophyta</taxon>
        <taxon>Tracheophyta</taxon>
        <taxon>Spermatophyta</taxon>
        <taxon>Magnoliopsida</taxon>
        <taxon>eudicotyledons</taxon>
        <taxon>Gunneridae</taxon>
        <taxon>Pentapetalae</taxon>
        <taxon>Caryophyllales</taxon>
        <taxon>Chenopodiaceae</taxon>
        <taxon>Chenopodioideae</taxon>
        <taxon>Atripliceae</taxon>
        <taxon>Oxybasis</taxon>
    </lineage>
</organism>
<accession>Q5K3S9</accession>
<proteinExistence type="evidence at transcript level"/>
<feature type="chain" id="PRO_0000220444" description="Cytochrome b6-f complex subunit 6">
    <location>
        <begin position="1"/>
        <end position="31"/>
    </location>
</feature>
<feature type="transmembrane region" description="Helical" evidence="1">
    <location>
        <begin position="4"/>
        <end position="24"/>
    </location>
</feature>
<dbReference type="EMBL" id="AJ704435">
    <property type="protein sequence ID" value="CAG28647.1"/>
    <property type="molecule type" value="Genomic_DNA"/>
</dbReference>
<dbReference type="SMR" id="Q5K3S9"/>
<dbReference type="GO" id="GO:0009535">
    <property type="term" value="C:chloroplast thylakoid membrane"/>
    <property type="evidence" value="ECO:0007669"/>
    <property type="project" value="UniProtKB-SubCell"/>
</dbReference>
<dbReference type="GO" id="GO:0009512">
    <property type="term" value="C:cytochrome b6f complex"/>
    <property type="evidence" value="ECO:0007669"/>
    <property type="project" value="InterPro"/>
</dbReference>
<dbReference type="GO" id="GO:0045158">
    <property type="term" value="F:electron transporter, transferring electrons within cytochrome b6/f complex of photosystem II activity"/>
    <property type="evidence" value="ECO:0007669"/>
    <property type="project" value="UniProtKB-UniRule"/>
</dbReference>
<dbReference type="GO" id="GO:0015979">
    <property type="term" value="P:photosynthesis"/>
    <property type="evidence" value="ECO:0007669"/>
    <property type="project" value="UniProtKB-KW"/>
</dbReference>
<dbReference type="HAMAP" id="MF_00433">
    <property type="entry name" value="Cytb6_f_PetL"/>
    <property type="match status" value="1"/>
</dbReference>
<dbReference type="InterPro" id="IPR007802">
    <property type="entry name" value="Cyt_b6/f_cplx_su6"/>
</dbReference>
<dbReference type="PANTHER" id="PTHR37266">
    <property type="entry name" value="CYTOCHROME B6-F COMPLEX SUBUNIT 6"/>
    <property type="match status" value="1"/>
</dbReference>
<dbReference type="PANTHER" id="PTHR37266:SF1">
    <property type="entry name" value="CYTOCHROME B6-F COMPLEX SUBUNIT 6"/>
    <property type="match status" value="1"/>
</dbReference>
<dbReference type="Pfam" id="PF05115">
    <property type="entry name" value="PetL"/>
    <property type="match status" value="1"/>
</dbReference>
<dbReference type="SUPFAM" id="SSF103436">
    <property type="entry name" value="PetL subunit of the cytochrome b6f complex"/>
    <property type="match status" value="1"/>
</dbReference>
<geneLocation type="chloroplast"/>
<comment type="function">
    <text evidence="1">Component of the cytochrome b6-f complex, which mediates electron transfer between photosystem II (PSII) and photosystem I (PSI), cyclic electron flow around PSI, and state transitions. PetL is important for photoautotrophic growth as well as for electron transfer efficiency and stability of the cytochrome b6-f complex.</text>
</comment>
<comment type="subunit">
    <text evidence="1">The 4 large subunits of the cytochrome b6-f complex are cytochrome b6, subunit IV (17 kDa polypeptide, PetD), cytochrome f and the Rieske protein, while the 4 small subunits are PetG, PetL, PetM and PetN. The complex functions as a dimer.</text>
</comment>
<comment type="subcellular location">
    <subcellularLocation>
        <location evidence="1">Plastid</location>
        <location evidence="1">Chloroplast thylakoid membrane</location>
        <topology evidence="1">Single-pass membrane protein</topology>
    </subcellularLocation>
</comment>
<comment type="RNA editing">
    <location>
        <position position="2" evidence="2"/>
    </location>
</comment>
<comment type="similarity">
    <text evidence="1">Belongs to the PetL family.</text>
</comment>
<sequence>MFTLTSYFGFLLAALTITFVLFIGLNKIRLI</sequence>
<keyword id="KW-0150">Chloroplast</keyword>
<keyword id="KW-0249">Electron transport</keyword>
<keyword id="KW-0472">Membrane</keyword>
<keyword id="KW-0602">Photosynthesis</keyword>
<keyword id="KW-0934">Plastid</keyword>
<keyword id="KW-0691">RNA editing</keyword>
<keyword id="KW-0793">Thylakoid</keyword>
<keyword id="KW-0812">Transmembrane</keyword>
<keyword id="KW-1133">Transmembrane helix</keyword>
<keyword id="KW-0813">Transport</keyword>
<name>PETL_OXYRB</name>
<reference key="1">
    <citation type="journal article" date="2004" name="Nucleic Acids Res.">
        <title>Rapid evolution of RNA editing sites in a small non-essential plastid gene.</title>
        <authorList>
            <person name="Fiebig A."/>
            <person name="Stegemann S."/>
            <person name="Bock R."/>
        </authorList>
    </citation>
    <scope>NUCLEOTIDE SEQUENCE [GENOMIC DNA]</scope>
    <scope>RNA EDITING</scope>
    <source>
        <tissue>Leaf</tissue>
    </source>
</reference>
<evidence type="ECO:0000255" key="1">
    <source>
        <dbReference type="HAMAP-Rule" id="MF_00433"/>
    </source>
</evidence>
<evidence type="ECO:0000269" key="2">
    <source>
    </source>
</evidence>
<protein>
    <recommendedName>
        <fullName evidence="1">Cytochrome b6-f complex subunit 6</fullName>
    </recommendedName>
    <alternativeName>
        <fullName evidence="1">Cytochrome b6-f complex subunit PetL</fullName>
    </alternativeName>
    <alternativeName>
        <fullName evidence="1">Cytochrome b6-f complex subunit VI</fullName>
    </alternativeName>
</protein>